<name>WZYE_ECOLC</name>
<comment type="function">
    <text evidence="1">Probably involved in the polymerization of enterobacterial common antigen (ECA) trisaccharide repeat units.</text>
</comment>
<comment type="pathway">
    <text evidence="1">Bacterial outer membrane biogenesis; enterobacterial common antigen biosynthesis.</text>
</comment>
<comment type="subunit">
    <text evidence="1">Probably part of a complex composed of WzxE, WzyE and WzzE.</text>
</comment>
<comment type="subcellular location">
    <subcellularLocation>
        <location evidence="1">Cell inner membrane</location>
        <topology evidence="1">Multi-pass membrane protein</topology>
    </subcellularLocation>
</comment>
<comment type="similarity">
    <text evidence="1">Belongs to the WzyE family.</text>
</comment>
<protein>
    <recommendedName>
        <fullName evidence="1">Probable ECA polymerase</fullName>
    </recommendedName>
</protein>
<reference key="1">
    <citation type="submission" date="2008-02" db="EMBL/GenBank/DDBJ databases">
        <title>Complete sequence of Escherichia coli C str. ATCC 8739.</title>
        <authorList>
            <person name="Copeland A."/>
            <person name="Lucas S."/>
            <person name="Lapidus A."/>
            <person name="Glavina del Rio T."/>
            <person name="Dalin E."/>
            <person name="Tice H."/>
            <person name="Bruce D."/>
            <person name="Goodwin L."/>
            <person name="Pitluck S."/>
            <person name="Kiss H."/>
            <person name="Brettin T."/>
            <person name="Detter J.C."/>
            <person name="Han C."/>
            <person name="Kuske C.R."/>
            <person name="Schmutz J."/>
            <person name="Larimer F."/>
            <person name="Land M."/>
            <person name="Hauser L."/>
            <person name="Kyrpides N."/>
            <person name="Mikhailova N."/>
            <person name="Ingram L."/>
            <person name="Richardson P."/>
        </authorList>
    </citation>
    <scope>NUCLEOTIDE SEQUENCE [LARGE SCALE GENOMIC DNA]</scope>
    <source>
        <strain>ATCC 8739 / DSM 1576 / NBRC 3972 / NCIMB 8545 / WDCM 00012 / Crooks</strain>
    </source>
</reference>
<proteinExistence type="inferred from homology"/>
<accession>B1IWA6</accession>
<gene>
    <name evidence="1" type="primary">wzyE</name>
    <name type="ordered locus">EcolC_4209</name>
</gene>
<sequence>MSLLQFSGLFVVWLLCTLFIATLTWFEFRRVRFNFNVFFSLLFLLTFFFGFPLTSVLVFRFDVGVAPPEILLQALLSAGCFYAVYYVTYKTRLRKRVADVPRRPLFTMNRVETNLTWVILMGIALVSVGIFFMHNGFLLFRLNSYSQIFSSEVSGVALKRFFYFFIPAMLVVYFLRQDSKAWLFFLVSTVAFGLLTYMIVGGTRANIIIAFAIFLFIGIIRGWISLWMLAAAGVLGIVGMFWLALKRYGMNVSGDEAFYTFLYLTRDTFSPWENLALLLQNYDNIDFQGLAPIVRDFYVFIPSWLWPGRPSMVLNSANYFTWEVLNNHSGLAISPTLIGSLVVMGGALFIPLGAIVVGLIIKWFDWLYELGNRETNRYKAAILHSFCFGAIFNMIVLAREGLDSFVSRVVFFIVVFGACLMIAKLLYWLFESAGLIHKRTKSSLRTQVEG</sequence>
<organism>
    <name type="scientific">Escherichia coli (strain ATCC 8739 / DSM 1576 / NBRC 3972 / NCIMB 8545 / WDCM 00012 / Crooks)</name>
    <dbReference type="NCBI Taxonomy" id="481805"/>
    <lineage>
        <taxon>Bacteria</taxon>
        <taxon>Pseudomonadati</taxon>
        <taxon>Pseudomonadota</taxon>
        <taxon>Gammaproteobacteria</taxon>
        <taxon>Enterobacterales</taxon>
        <taxon>Enterobacteriaceae</taxon>
        <taxon>Escherichia</taxon>
    </lineage>
</organism>
<dbReference type="EMBL" id="CP000946">
    <property type="protein sequence ID" value="ACA79806.1"/>
    <property type="molecule type" value="Genomic_DNA"/>
</dbReference>
<dbReference type="RefSeq" id="WP_000055132.1">
    <property type="nucleotide sequence ID" value="NZ_MTFT01000015.1"/>
</dbReference>
<dbReference type="GeneID" id="75204784"/>
<dbReference type="KEGG" id="ecl:EcolC_4209"/>
<dbReference type="HOGENOM" id="CLU_049711_0_0_6"/>
<dbReference type="UniPathway" id="UPA00566"/>
<dbReference type="GO" id="GO:0005886">
    <property type="term" value="C:plasma membrane"/>
    <property type="evidence" value="ECO:0007669"/>
    <property type="project" value="UniProtKB-SubCell"/>
</dbReference>
<dbReference type="GO" id="GO:0009246">
    <property type="term" value="P:enterobacterial common antigen biosynthetic process"/>
    <property type="evidence" value="ECO:0007669"/>
    <property type="project" value="UniProtKB-UniRule"/>
</dbReference>
<dbReference type="HAMAP" id="MF_01003">
    <property type="entry name" value="WzyE"/>
    <property type="match status" value="1"/>
</dbReference>
<dbReference type="InterPro" id="IPR010691">
    <property type="entry name" value="WzyE"/>
</dbReference>
<dbReference type="NCBIfam" id="NF002820">
    <property type="entry name" value="PRK02975.1"/>
    <property type="match status" value="1"/>
</dbReference>
<dbReference type="Pfam" id="PF06899">
    <property type="entry name" value="WzyE"/>
    <property type="match status" value="1"/>
</dbReference>
<evidence type="ECO:0000255" key="1">
    <source>
        <dbReference type="HAMAP-Rule" id="MF_01003"/>
    </source>
</evidence>
<keyword id="KW-0997">Cell inner membrane</keyword>
<keyword id="KW-1003">Cell membrane</keyword>
<keyword id="KW-0472">Membrane</keyword>
<keyword id="KW-0812">Transmembrane</keyword>
<keyword id="KW-1133">Transmembrane helix</keyword>
<feature type="chain" id="PRO_1000083952" description="Probable ECA polymerase">
    <location>
        <begin position="1"/>
        <end position="450"/>
    </location>
</feature>
<feature type="transmembrane region" description="Helical" evidence="1">
    <location>
        <begin position="6"/>
        <end position="26"/>
    </location>
</feature>
<feature type="transmembrane region" description="Helical" evidence="1">
    <location>
        <begin position="37"/>
        <end position="57"/>
    </location>
</feature>
<feature type="transmembrane region" description="Helical" evidence="1">
    <location>
        <begin position="63"/>
        <end position="83"/>
    </location>
</feature>
<feature type="transmembrane region" description="Helical" evidence="1">
    <location>
        <begin position="118"/>
        <end position="138"/>
    </location>
</feature>
<feature type="transmembrane region" description="Helical" evidence="1">
    <location>
        <begin position="155"/>
        <end position="175"/>
    </location>
</feature>
<feature type="transmembrane region" description="Helical" evidence="1">
    <location>
        <begin position="181"/>
        <end position="201"/>
    </location>
</feature>
<feature type="transmembrane region" description="Helical" evidence="1">
    <location>
        <begin position="207"/>
        <end position="227"/>
    </location>
</feature>
<feature type="transmembrane region" description="Helical" evidence="1">
    <location>
        <begin position="228"/>
        <end position="248"/>
    </location>
</feature>
<feature type="transmembrane region" description="Helical" evidence="1">
    <location>
        <begin position="341"/>
        <end position="361"/>
    </location>
</feature>
<feature type="transmembrane region" description="Helical" evidence="1">
    <location>
        <begin position="378"/>
        <end position="398"/>
    </location>
</feature>
<feature type="transmembrane region" description="Helical" evidence="1">
    <location>
        <begin position="410"/>
        <end position="430"/>
    </location>
</feature>